<accession>Q06GJ0</accession>
<sequence>MWSRRIPLFIFGVLVLILSVAAEDVVWRWSCDNGKCVKLKNDPRSSEPALSLEACKMFCNEYGLLWPRPTGEADLGNFLSKINLNSIEVKILKKGATDDLMEAAAKRFKEQVSLAIPRGSTPKLTGKAVDVYLVNENPNEKAFSLEMDESYGLRVSPSGADRVNATITANSFFGMRHGLETLSQLFVFDDIRDHLLMVRDVNISDKPVYPYRGILLDTARNYYSIESIKRTIEAMAAVKLNTFHWHITDSQSFPFVTTKRPNLYKFGALSPQKVYTKAAIREVVRFGLERGVRVLPEFDAPAHVGEGWQDTDLTVCFKAEPWKSYCVEPPCGQLNPTKDELYQYLEDIYSDMAEVFDTTDIFHMGGDEVSEACWNSSDSIQNFMMQNRWDLDKESFLKLWNYFQQKAQDKAYKAFGKKLPLILWTSTLTNYKHIDDYLNKDDYIIQVWTTGVDPQIKGLLEKGYRLIMSNYDALYFDCGYGAWVGAGNNWCSPYIGWQKVYDNSPAVIALEHRDQVLGGEAALWSEQSDTSTLDGRLWPRAAALAERLWAEPATSWQDAEYRMLHIRERLVRMGIQAESLQPEWCYQNEGYCYS</sequence>
<feature type="signal peptide" evidence="1">
    <location>
        <begin position="1"/>
        <end position="22"/>
    </location>
</feature>
<feature type="chain" id="PRO_5004165440" description="Chitooligosaccharidolytic beta-N-acetylglucosaminidase" evidence="1">
    <location>
        <begin position="23"/>
        <end position="594"/>
    </location>
</feature>
<feature type="active site" description="Charge relay system" evidence="20">
    <location>
        <position position="249"/>
    </location>
</feature>
<feature type="active site" description="Charge relay system" evidence="20">
    <location>
        <position position="303"/>
    </location>
</feature>
<feature type="active site" description="Charge relay system" evidence="20">
    <location>
        <position position="368"/>
    </location>
</feature>
<feature type="site" description="Important determinant of glycosidic bond specificity" evidence="7">
    <location>
        <position position="327"/>
    </location>
</feature>
<feature type="site" description="Essential for chitooligosaccharide substrate binding" evidence="7">
    <location>
        <position position="328"/>
    </location>
</feature>
<feature type="site" description="Essential for chitooligosaccharide substrate binding" evidence="7">
    <location>
        <position position="490"/>
    </location>
</feature>
<feature type="glycosylation site" description="N-linked (GlcNAc...) asparagine" evidence="3 8 10 28 29 30 31">
    <location>
        <position position="164"/>
    </location>
</feature>
<feature type="glycosylation site" description="N-linked (GlcNAc...) asparagine" evidence="3 8 10 28 29 30 31">
    <location>
        <position position="375"/>
    </location>
</feature>
<feature type="disulfide bond" evidence="5 6 7 8 9 10 22 23 24 25 26 27 28 29 30 31">
    <location>
        <begin position="31"/>
        <end position="59"/>
    </location>
</feature>
<feature type="disulfide bond" evidence="5 6 7 8 9 10 22 23 24 25 26 27 28 29 30 31">
    <location>
        <begin position="36"/>
        <end position="55"/>
    </location>
</feature>
<feature type="disulfide bond" evidence="5 6 7 8 9 10 22 23 24 25 26 27 28 29 30 31">
    <location>
        <begin position="316"/>
        <end position="373"/>
    </location>
</feature>
<feature type="disulfide bond" evidence="5 6 7 8 9 10 22 23 24 25 26 27 28 29 30 31">
    <location>
        <begin position="326"/>
        <end position="331"/>
    </location>
</feature>
<feature type="disulfide bond" evidence="5 6 7 8 9 10 22 23 24 25 26 27 28 29 30 31">
    <location>
        <begin position="478"/>
        <end position="491"/>
    </location>
</feature>
<feature type="disulfide bond" evidence="5 6 7 8 9 10 22 23 24 25 26 27 28 29 30 31">
    <location>
        <begin position="585"/>
        <end position="592"/>
    </location>
</feature>
<feature type="mutagenesis site" description="5.3-fold decrease in Ki for PUGNAc inhibitor as a result of widened active pocket entrance. Slight decrease in KM, but decreased catalytic activity with 4MU-beta-GlcNAc or GlcNAc-beta-1,4-GlcNAc as substrates. No effect in sensitivity toward TMG-chitotriomycin inhibitor. Able to efficiently hydrolyze GlcNAc-beta-1,2-Man in contrast to the wild-type." evidence="5 6 7">
    <original>V</original>
    <variation>G</variation>
    <location>
        <position position="327"/>
    </location>
</feature>
<feature type="mutagenesis site" description="19% decrease in catalytic activity with 4MU-beta-GlcNAc as substrate. 8-fold increase in KM for GlcNAc-beta-1,4-GlcNAc. 42-fold increase in Ki for TMG-chitotriomycin inhibitor. No effect in KM with p-nitrophenyl-beta-GlcNAc as substrate. 9.8-fold increase in Ki for NMAGT inhibitor. No effect in Ki with NGT as the inhibitor." evidence="5 7 9">
    <original>E</original>
    <variation>A</variation>
    <location>
        <position position="328"/>
    </location>
</feature>
<feature type="mutagenesis site" description="19% decrease in catalytic activity with 4MU-beta-GlcNAc as substrate. 2.5-fold increase in KM for GlcNAc-beta-1,4-GlcNAc. kcat is 12% of the wild-type value using GlcNAc-beta-1,4-GlcNAc as substrate. 1.6-fold increase in Ki for TMG-chitotriomycin inhibitor." evidence="5 7">
    <original>E</original>
    <variation>Q</variation>
    <location>
        <position position="328"/>
    </location>
</feature>
<feature type="mutagenesis site" description="1389-fold decrease in catalytic activity with 4MU-beta-GlcNAc as substrate." evidence="5">
    <original>H</original>
    <variation>A</variation>
    <location>
        <position position="433"/>
    </location>
</feature>
<feature type="mutagenesis site" description="2-fold increase in KM, 927-fold decrease in kcat and a 1900-fold decrease in kcat/KM with 4MU-beta-GlcNAc as substrate." evidence="5">
    <original>W</original>
    <variation>A</variation>
    <location>
        <position position="448"/>
    </location>
</feature>
<feature type="mutagenesis site" description="Slight increase in KM and more than 1000-fold decrease in kcat/KM with 4MU-beta-GlcNAc as substrate." evidence="5">
    <original>W</original>
    <variation>F</variation>
    <location>
        <position position="448"/>
    </location>
</feature>
<feature type="mutagenesis site" description="2,277-fold increase in Ki for TMG-chitotriomycin inhibitor. 13-fold increase in KM for GlcNAc-beta-1,4-GlcNAc. KM similar to that of wild-type, but 62% decrease in catalytic activity with 4MU-beta-GlcNAc as substrate. No inhibition by Q2, a synthesized non-carbohydrate unsymmetrical dyad of naphthalimide and thiadiazole having a dimethylamino group at C4 of the naphthalimide. No inhibition by berberine." evidence="5 7 8 10">
    <original>W</original>
    <variation>A</variation>
    <location>
        <position position="490"/>
    </location>
</feature>
<feature type="strand" evidence="32">
    <location>
        <begin position="27"/>
        <end position="32"/>
    </location>
</feature>
<feature type="strand" evidence="32">
    <location>
        <begin position="35"/>
        <end position="40"/>
    </location>
</feature>
<feature type="helix" evidence="32">
    <location>
        <begin position="52"/>
        <end position="59"/>
    </location>
</feature>
<feature type="turn" evidence="32">
    <location>
        <begin position="61"/>
        <end position="64"/>
    </location>
</feature>
<feature type="strand" evidence="32">
    <location>
        <begin position="79"/>
        <end position="91"/>
    </location>
</feature>
<feature type="helix" evidence="32">
    <location>
        <begin position="98"/>
        <end position="112"/>
    </location>
</feature>
<feature type="helix" evidence="32">
    <location>
        <begin position="113"/>
        <end position="115"/>
    </location>
</feature>
<feature type="strand" evidence="32">
    <location>
        <begin position="126"/>
        <end position="137"/>
    </location>
</feature>
<feature type="strand" evidence="32">
    <location>
        <begin position="151"/>
        <end position="158"/>
    </location>
</feature>
<feature type="turn" evidence="32">
    <location>
        <begin position="159"/>
        <end position="161"/>
    </location>
</feature>
<feature type="strand" evidence="32">
    <location>
        <begin position="162"/>
        <end position="171"/>
    </location>
</feature>
<feature type="helix" evidence="32">
    <location>
        <begin position="172"/>
        <end position="183"/>
    </location>
</feature>
<feature type="strand" evidence="32">
    <location>
        <begin position="186"/>
        <end position="189"/>
    </location>
</feature>
<feature type="turn" evidence="32">
    <location>
        <begin position="190"/>
        <end position="193"/>
    </location>
</feature>
<feature type="strand" evidence="32">
    <location>
        <begin position="194"/>
        <end position="205"/>
    </location>
</feature>
<feature type="strand" evidence="32">
    <location>
        <begin position="210"/>
        <end position="217"/>
    </location>
</feature>
<feature type="strand" evidence="32">
    <location>
        <begin position="219"/>
        <end position="221"/>
    </location>
</feature>
<feature type="helix" evidence="32">
    <location>
        <begin position="225"/>
        <end position="237"/>
    </location>
</feature>
<feature type="strand" evidence="32">
    <location>
        <begin position="242"/>
        <end position="246"/>
    </location>
</feature>
<feature type="strand" evidence="32">
    <location>
        <begin position="258"/>
        <end position="260"/>
    </location>
</feature>
<feature type="helix" evidence="32">
    <location>
        <begin position="262"/>
        <end position="267"/>
    </location>
</feature>
<feature type="strand" evidence="32">
    <location>
        <begin position="268"/>
        <end position="273"/>
    </location>
</feature>
<feature type="helix" evidence="32">
    <location>
        <begin position="277"/>
        <end position="289"/>
    </location>
</feature>
<feature type="strand" evidence="32">
    <location>
        <begin position="293"/>
        <end position="303"/>
    </location>
</feature>
<feature type="turn" evidence="32">
    <location>
        <begin position="309"/>
        <end position="312"/>
    </location>
</feature>
<feature type="strand" evidence="33">
    <location>
        <begin position="314"/>
        <end position="316"/>
    </location>
</feature>
<feature type="helix" evidence="32">
    <location>
        <begin position="322"/>
        <end position="324"/>
    </location>
</feature>
<feature type="strand" evidence="32">
    <location>
        <begin position="327"/>
        <end position="330"/>
    </location>
</feature>
<feature type="helix" evidence="32">
    <location>
        <begin position="340"/>
        <end position="355"/>
    </location>
</feature>
<feature type="strand" evidence="32">
    <location>
        <begin position="362"/>
        <end position="365"/>
    </location>
</feature>
<feature type="helix" evidence="32">
    <location>
        <begin position="371"/>
        <end position="375"/>
    </location>
</feature>
<feature type="helix" evidence="32">
    <location>
        <begin position="378"/>
        <end position="386"/>
    </location>
</feature>
<feature type="turn" evidence="32">
    <location>
        <begin position="393"/>
        <end position="395"/>
    </location>
</feature>
<feature type="helix" evidence="32">
    <location>
        <begin position="396"/>
        <end position="415"/>
    </location>
</feature>
<feature type="strand" evidence="32">
    <location>
        <begin position="421"/>
        <end position="427"/>
    </location>
</feature>
<feature type="turn" evidence="32">
    <location>
        <begin position="431"/>
        <end position="433"/>
    </location>
</feature>
<feature type="helix" evidence="32">
    <location>
        <begin position="434"/>
        <end position="437"/>
    </location>
</feature>
<feature type="turn" evidence="32">
    <location>
        <begin position="440"/>
        <end position="442"/>
    </location>
</feature>
<feature type="strand" evidence="32">
    <location>
        <begin position="443"/>
        <end position="447"/>
    </location>
</feature>
<feature type="helix" evidence="32">
    <location>
        <begin position="455"/>
        <end position="461"/>
    </location>
</feature>
<feature type="strand" evidence="32">
    <location>
        <begin position="465"/>
        <end position="468"/>
    </location>
</feature>
<feature type="helix" evidence="32">
    <location>
        <begin position="471"/>
        <end position="474"/>
    </location>
</feature>
<feature type="turn" evidence="32">
    <location>
        <begin position="476"/>
        <end position="479"/>
    </location>
</feature>
<feature type="strand" evidence="32">
    <location>
        <begin position="483"/>
        <end position="488"/>
    </location>
</feature>
<feature type="helix" evidence="32">
    <location>
        <begin position="497"/>
        <end position="502"/>
    </location>
</feature>
<feature type="helix" evidence="32">
    <location>
        <begin position="505"/>
        <end position="509"/>
    </location>
</feature>
<feature type="helix" evidence="32">
    <location>
        <begin position="510"/>
        <end position="515"/>
    </location>
</feature>
<feature type="strand" evidence="32">
    <location>
        <begin position="516"/>
        <end position="523"/>
    </location>
</feature>
<feature type="turn" evidence="32">
    <location>
        <begin position="530"/>
        <end position="532"/>
    </location>
</feature>
<feature type="helix" evidence="32">
    <location>
        <begin position="533"/>
        <end position="537"/>
    </location>
</feature>
<feature type="helix" evidence="32">
    <location>
        <begin position="540"/>
        <end position="550"/>
    </location>
</feature>
<feature type="helix" evidence="32">
    <location>
        <begin position="556"/>
        <end position="558"/>
    </location>
</feature>
<feature type="helix" evidence="32">
    <location>
        <begin position="560"/>
        <end position="572"/>
    </location>
</feature>
<feature type="helix" evidence="32">
    <location>
        <begin position="583"/>
        <end position="587"/>
    </location>
</feature>
<keyword id="KW-0002">3D-structure</keyword>
<keyword id="KW-0119">Carbohydrate metabolism</keyword>
<keyword id="KW-0146">Chitin degradation</keyword>
<keyword id="KW-0903">Direct protein sequencing</keyword>
<keyword id="KW-1015">Disulfide bond</keyword>
<keyword id="KW-0325">Glycoprotein</keyword>
<keyword id="KW-0326">Glycosidase</keyword>
<keyword id="KW-0378">Hydrolase</keyword>
<keyword id="KW-0624">Polysaccharide degradation</keyword>
<keyword id="KW-0732">Signal</keyword>
<name>HEXC_OSTFU</name>
<proteinExistence type="evidence at protein level"/>
<reference evidence="21" key="1">
    <citation type="journal article" date="2008" name="FEBS J.">
        <title>A novel beta-N-acetyl-D-hexosaminidase from the insect Ostrinia furnacalis (Guenee).</title>
        <authorList>
            <person name="Yang Q."/>
            <person name="Liu T."/>
            <person name="Liu F."/>
            <person name="Qu M."/>
            <person name="Qian X."/>
        </authorList>
    </citation>
    <scope>NUCLEOTIDE SEQUENCE [MRNA]</scope>
    <scope>PROTEIN SEQUENCE OF 108-118; 110-118; 128-141; 142-154; 177-199; 200-212; 213-220; 260-265 AND 500-513</scope>
    <scope>FUNCTION</scope>
    <scope>CATALYTIC ACTIVITY</scope>
    <scope>BIOPHYSICOCHEMICAL PROPERTIES</scope>
    <scope>SUBSTRATE SPECIFICITY</scope>
    <scope>REACTION MECHANISM</scope>
    <scope>SUBUNIT</scope>
    <scope>DEVELOPMENTAL STAGE</scope>
    <scope>IDENTIFICATION BY MASS SPECTROMETRY</scope>
    <scope>MASS SPECTROMETRY</scope>
    <scope>BIOTECHNOLOGY</scope>
</reference>
<reference evidence="25 26" key="2">
    <citation type="journal article" date="2011" name="Biochem. J.">
        <title>Active-pocket size differentiating insectile from bacterial chitinolytic beta-N-acetyl-D-hexosaminidases.</title>
        <authorList>
            <person name="Liu T."/>
            <person name="Zhang H."/>
            <person name="Liu F."/>
            <person name="Chen L."/>
            <person name="Shen X."/>
            <person name="Yang Q."/>
        </authorList>
    </citation>
    <scope>X-RAY CRYSTALLOGRAPHY (2.00 ANGSTROMS) OF 23-594 AND MUTANT GLY-327 IN COMPLEXES WITH PUGNAC INHIBITOR</scope>
    <scope>CATALYTIC ACTIVITY</scope>
    <scope>ACTIVITY REGULATION</scope>
    <scope>SUBUNIT</scope>
    <scope>DISULFIDE BONDS</scope>
    <scope>MUTAGENESIS OF VAL-327</scope>
</reference>
<reference evidence="22 23" key="3">
    <citation type="journal article" date="2011" name="J. Biol. Chem.">
        <title>Structural determinants of an insect beta-N-Acetyl-D-hexosaminidase specialized as a chitinolytic enzyme.</title>
        <authorList>
            <person name="Liu T."/>
            <person name="Zhang H."/>
            <person name="Liu F."/>
            <person name="Wu Q."/>
            <person name="Shen X."/>
            <person name="Yang Q."/>
        </authorList>
    </citation>
    <scope>X-RAY CRYSTALLOGRAPHY (2.10 ANGSTROMS) OF 23-594 AND IN COMPLEX WITH TMG-CHITOTRIOMYCIN INHIBITOR</scope>
    <scope>FUNCTION</scope>
    <scope>CATALYTIC ACTIVITY</scope>
    <scope>ACTIVITY REGULATION</scope>
    <scope>BIOPHYSICOCHEMICAL PROPERTIES</scope>
    <scope>REACTION MECHANISM</scope>
    <scope>SUBUNIT</scope>
    <scope>DEVELOPMENTAL STAGE</scope>
    <scope>DISRUPTION PHENOTYPE</scope>
    <scope>DISULFIDE BONDS</scope>
    <scope>MUTAGENESIS OF VAL-327; GLU-328; HIS-433; TRP-448 AND TRP-490</scope>
</reference>
<reference evidence="27" key="4">
    <citation type="journal article" date="2012" name="PLoS ONE">
        <title>Structural insights into cellulolytic and chitinolytic enzymes revealing crucial residues of insect beta-N-acetyl-D-hexosaminidase.</title>
        <authorList>
            <person name="Liu T."/>
            <person name="Zhou Y."/>
            <person name="Chen L."/>
            <person name="Chen W."/>
            <person name="Liu L."/>
            <person name="Shen X."/>
            <person name="Zhang W."/>
            <person name="Zhang J."/>
            <person name="Yang Q."/>
        </authorList>
    </citation>
    <scope>X-RAY CRYSTALLOGRAPHY (2.50 ANGSTROMS) OF 23-594 OF MUTANT ALA-328 IN COMPLEX WITH TMG-CHITOTRIOMYCIN INHIBITOR</scope>
    <scope>CATALYTIC ACTIVITY</scope>
    <scope>ACTIVITY REGULATION</scope>
    <scope>SITES</scope>
    <scope>DISULFIDE BONDS</scope>
    <scope>MUTAGENESIS OF VAL-327; GLU-328 AND TRP-490</scope>
</reference>
<reference evidence="28 29" key="5">
    <citation type="journal article" date="2014" name="Sci. Rep.">
        <title>A crystal structure-guided rational design switching non-carbohydrate inhibitors' specificity between two beta-GlcNAcase homologs.</title>
        <authorList>
            <person name="Liu T."/>
            <person name="Guo P."/>
            <person name="Zhou Y."/>
            <person name="Wang J."/>
            <person name="Chen L."/>
            <person name="Yang H."/>
            <person name="Qian X."/>
            <person name="Yang Q."/>
        </authorList>
    </citation>
    <scope>X-RAY CRYSTALLOGRAPHY (2.10 ANGSTROMS) OF 23-594 IN COMPLEXES WITH NAPHTHALIMIDE DERIVATIVE INHIBITORS</scope>
    <scope>CATALYTIC ACTIVITY</scope>
    <scope>ACTIVITY REGULATION</scope>
    <scope>BIOTECHNOLOGY</scope>
    <scope>GLYCOSYLATION AT ASN-164 AND ASN-375</scope>
    <scope>DISULFIDE BONDS</scope>
    <scope>MUTAGENESIS OF TRP-490</scope>
</reference>
<reference evidence="24" key="6">
    <citation type="journal article" date="2015" name="FEBS Lett.">
        <title>Exploring NAG-thiazoline and its derivatives as inhibitors of chitinolytic beta-acetylglucosaminidases.</title>
        <authorList>
            <person name="Liu T."/>
            <person name="Xia M."/>
            <person name="Zhang H."/>
            <person name="Zhou H."/>
            <person name="Wang J."/>
            <person name="Shen X."/>
            <person name="Yang Q."/>
        </authorList>
    </citation>
    <scope>X-RAY CRYSTALLOGRAPHY (2.00 ANGSTROMS) OF 23-594 IN COMPLEX WITH NAG-THIAZOLINE INHIBITOR</scope>
    <scope>CATALYTIC ACTIVITY</scope>
    <scope>ACTIVITY REGULATION</scope>
    <scope>BIOPHYSICOCHEMICAL PROPERTIES</scope>
    <scope>REACTION MECHANISM</scope>
    <scope>DISULFIDE BONDS</scope>
    <scope>MUTAGENESIS OF GLU-328</scope>
</reference>
<reference evidence="30 31" key="7">
    <citation type="journal article" date="2018" name="J. Biol. Chem.">
        <title>Glycoside hydrolase family 18 and 20 enzymes are novel targets of the traditional medicine berberine.</title>
        <authorList>
            <person name="Duan Y."/>
            <person name="Liu T."/>
            <person name="Zhou Y."/>
            <person name="Dou T."/>
            <person name="Yang Q."/>
        </authorList>
    </citation>
    <scope>X-RAY CRYSTALLOGRAPHY (2.21 ANGSTROMS) OF 23-594 IN COMPLEXES WITH BERBERINE INHIBITOR AND ITS DERIVATIVE</scope>
    <scope>CATALYTIC ACTIVITY</scope>
    <scope>ACTIVITY REGULATION</scope>
    <scope>GLYCOSYLATION AT ASN-164 AND ASN-375</scope>
    <scope>DISULFIDE BONDS</scope>
    <scope>MUTAGENESIS OF TRP-490</scope>
</reference>
<organism evidence="21">
    <name type="scientific">Ostrinia furnacalis</name>
    <name type="common">Asian corn borer</name>
    <dbReference type="NCBI Taxonomy" id="93504"/>
    <lineage>
        <taxon>Eukaryota</taxon>
        <taxon>Metazoa</taxon>
        <taxon>Ecdysozoa</taxon>
        <taxon>Arthropoda</taxon>
        <taxon>Hexapoda</taxon>
        <taxon>Insecta</taxon>
        <taxon>Pterygota</taxon>
        <taxon>Neoptera</taxon>
        <taxon>Endopterygota</taxon>
        <taxon>Lepidoptera</taxon>
        <taxon>Glossata</taxon>
        <taxon>Ditrysia</taxon>
        <taxon>Pyraloidea</taxon>
        <taxon>Crambidae</taxon>
        <taxon>Pyraustinae</taxon>
        <taxon>Ostrinia</taxon>
    </lineage>
</organism>
<comment type="function">
    <text evidence="4 5">Hydrolyzes one beta-GlcNAc unit at a time from the non-reducing ends of substrates, with a preference for shorter substrates. The 2-acetamido group and the beta-glycoside bond linkage in the substrate are required for its activity. Active with p-nitrophenyl (pNP)-beta-GlcNAc, pNP-beta-GalNAc and chitooligosaccharides (degree of polymerization from 2 to 6), but not with the complex N-glycan substrate (GlcNAcbeta-1,2Manalpha-1,6)(GlcNAcbeta-1,2Manalpha-1,3)Manbeta-1,4GlcNAcbeta-1,4GlcNAc-PA (GnGn-PA), pNP-alpha-GlcNAc or with the long polymer colloidal chitin. Involved in chitin catabolism (PubMed:18959754). Involved in the degradation of old cuticle during the pupation stage (PubMed:21106526).</text>
</comment>
<comment type="catalytic activity">
    <reaction evidence="2 4 5 6 7 8 9 10">
        <text>Hydrolysis of terminal non-reducing N-acetyl-D-hexosamine residues in N-acetyl-beta-D-hexosaminides.</text>
        <dbReference type="EC" id="3.2.1.52"/>
    </reaction>
</comment>
<comment type="activity regulation">
    <text evidence="5 6 7 8 9 10">Inhibited by O-(2-acetamido-2-deoxy-D-glucopyransylidene)-amino-N-phenylcarbamate (PUGNAc) (PubMed:21692744). Inhibited by thiabendazole (TMG)-chitotriomycin (PubMed:21106526, PubMed:21692744, PubMed:23300622). Inhibited by 6-(dimethylamino)-2-(2-(((5-methyl-1,3,4-thiadiazol-2-yl)methyl)amino)ethyl)- 1H-benzo[de]isoquinoline-1,3(2H)-dione (Q2), a synthesized non-carbohydrate unsymmetrical dyad of naphthalimide and thiadiazole having a dimethylamino group at C4 of the naphthalimide (PubMed:25155420). Inhibited poorly by N-acetyl-glucosamine (NAG)-thiazoline (NGT), but when the thiazoline ring of NGT is replaced by a bulky substituent such as in compound 1,2-dideoxy-2'-methylamino-alpha-D-glucopyranoso-[2,1-d]-Delta2'-thiazoline (NMAGT), the inhibition constant Ki is lowered 600-fold compared to that of NGT (PubMed:25436416). Inhibited by berberine, berberine analogs thalifendine and palmatine, and berberine derivative SYSU-1, but not by berberine analog tetrahydroberberine (PubMed:30135205).</text>
</comment>
<comment type="biophysicochemical properties">
    <kinetics>
        <KM evidence="4">0.3 mM for GlcNAc-beta-1,4-GlcNAc (at pH 6.8 and 25 degrees Celsius)</KM>
        <KM evidence="4">0.29 mM for p-nitrophenyl-beta-GlcNAc (at pH 6.8 and 25 degrees Celsius)</KM>
        <KM evidence="4">0.43 mM for p-nitrophenyl-beta-GalNAc (at pH 6.8 and 25 degrees Celsius)</KM>
        <KM evidence="9">0.15 mM for p-nitrophenyl-beta-GlcNAc (at pH 6.0 and 25 degrees Celsius)</KM>
        <KM evidence="5">0.107 mM for 4-methylumbelliferone-N-acetyl-beta-D-glucosaminide (4MU-beta-GlcNAc) (at 25 degrees Celsius)</KM>
        <KM evidence="5">0.148 mM for GlcNAc-beta-1,4-GlcNAc (at pH 7.0 and 25 degrees Celsius)</KM>
        <text evidence="4 5">kcat is 934 sec(-1) with GlcNAc-beta-1,4-GlcNAc as substrate. kcat is 708 sec(-1) with p-nitrophenyl-beta-GlcNAc as substrate. kcat is 766 sec(-1) with p-nitrophenyl-beta-GalNAc as substrate (PubMed:18959754). kcat is 434.7 sec(-1) with 4MU-beta-GlcNAc as substrate. kcat is 507.4 sec(-1) with GlcNAc-beta-1,4-GlcNAc as substrate (PubMed:21106526).</text>
    </kinetics>
    <phDependence>
        <text evidence="4">Optimum pH is around 7.0.</text>
    </phDependence>
    <temperatureDependence>
        <text evidence="4">Optimum temperature is 30 degrees Celsius. Stable up to 40 degrees Celsius.</text>
    </temperatureDependence>
</comment>
<comment type="subunit">
    <text evidence="4 5 6">Homodimer.</text>
</comment>
<comment type="developmental stage">
    <text evidence="4 5">Expression is dramatically up-regulated at the wandering stage. Low expression at fifth instar larva (day 1), prepupal, pupal (days 1 and 2) and adult stages (PubMed:18959754). Expression is up-regulated before each molting stage during development of the late fourth instar larva (4L), late fifth instar larva (5L), prepupa (PP), and late pupa (P3). The expression level reaches its peak at the fifth instar day 5 (5L5) and prepupa stages, and the level is about 10 times higher than that of fifth instar day 3 (5L3) larva. At the 5L3 stage, expression levels in the integument and alimentary tract are similar. However, at the 5L5 stage, the expression level in the integument is up-regulated more than 3-fold, but remains unchanged in the alimentary tract (PubMed:21106526).</text>
</comment>
<comment type="mass spectrometry"/>
<comment type="disruption phenotype">
    <text evidence="5">RNA interference of this gene does not cause any visible changes in phenotype in larvae before pupation. At the pupation stage, 20% of the larvae show abnormal phenotypes. They fail to shed their old cuticles completely before starting to form new ones underneath.</text>
</comment>
<comment type="biotechnology">
    <text evidence="8 19">A potential target for eco-friendly pesticide development because of its species specificity and narrow substrate spectrum (PubMed:18959754). Q2, the designed non-carbohydrate naphthalimide-based inhibitor against this enzyme has potential use as pharmaceutical or pesticide as it selectively recognizes chitinolytic beta-GlcNAcases, but not glycoconjugate-lytic beta-GlcNAcases (PubMed:25155420).</text>
</comment>
<comment type="similarity">
    <text evidence="2">Belongs to the glycosyl hydrolase 20 family.</text>
</comment>
<protein>
    <recommendedName>
        <fullName evidence="18">Chitooligosaccharidolytic beta-N-acetylglucosaminidase</fullName>
        <ecNumber evidence="4 5 6 7 8 9 10">3.2.1.52</ecNumber>
    </recommendedName>
    <alternativeName>
        <fullName evidence="15 16">Beta-GlcNAcase</fullName>
    </alternativeName>
    <alternativeName>
        <fullName evidence="11 12 13 14 17">Beta-N-acetyl-D-hexosaminidase</fullName>
    </alternativeName>
    <alternativeName>
        <fullName evidence="2">Beta-hexosaminidase</fullName>
    </alternativeName>
    <alternativeName>
        <fullName evidence="11 12 13 14 15 16 17">OfHex1</fullName>
    </alternativeName>
</protein>
<dbReference type="EC" id="3.2.1.52" evidence="4 5 6 7 8 9 10"/>
<dbReference type="EMBL" id="DQ887769">
    <property type="protein sequence ID" value="ABI81756.1"/>
    <property type="molecule type" value="mRNA"/>
</dbReference>
<dbReference type="PDB" id="3NSM">
    <property type="method" value="X-ray"/>
    <property type="resolution" value="2.10 A"/>
    <property type="chains" value="A=23-594"/>
</dbReference>
<dbReference type="PDB" id="3NSN">
    <property type="method" value="X-ray"/>
    <property type="resolution" value="2.10 A"/>
    <property type="chains" value="A=23-594"/>
</dbReference>
<dbReference type="PDB" id="3OZO">
    <property type="method" value="X-ray"/>
    <property type="resolution" value="2.00 A"/>
    <property type="chains" value="A=23-594"/>
</dbReference>
<dbReference type="PDB" id="3OZP">
    <property type="method" value="X-ray"/>
    <property type="resolution" value="2.00 A"/>
    <property type="chains" value="A=23-594"/>
</dbReference>
<dbReference type="PDB" id="3S6T">
    <property type="method" value="X-ray"/>
    <property type="resolution" value="2.30 A"/>
    <property type="chains" value="A=20-594"/>
</dbReference>
<dbReference type="PDB" id="3VTR">
    <property type="method" value="X-ray"/>
    <property type="resolution" value="2.50 A"/>
    <property type="chains" value="A=23-594"/>
</dbReference>
<dbReference type="PDB" id="3WMB">
    <property type="method" value="X-ray"/>
    <property type="resolution" value="2.70 A"/>
    <property type="chains" value="A=23-594"/>
</dbReference>
<dbReference type="PDB" id="3WMC">
    <property type="method" value="X-ray"/>
    <property type="resolution" value="2.10 A"/>
    <property type="chains" value="A=23-594"/>
</dbReference>
<dbReference type="PDB" id="5Y0V">
    <property type="method" value="X-ray"/>
    <property type="resolution" value="2.42 A"/>
    <property type="chains" value="A=23-594"/>
</dbReference>
<dbReference type="PDB" id="5Y1B">
    <property type="method" value="X-ray"/>
    <property type="resolution" value="2.21 A"/>
    <property type="chains" value="A=23-594"/>
</dbReference>
<dbReference type="PDBsum" id="3NSM"/>
<dbReference type="PDBsum" id="3NSN"/>
<dbReference type="PDBsum" id="3OZO"/>
<dbReference type="PDBsum" id="3OZP"/>
<dbReference type="PDBsum" id="3S6T"/>
<dbReference type="PDBsum" id="3VTR"/>
<dbReference type="PDBsum" id="3WMB"/>
<dbReference type="PDBsum" id="3WMC"/>
<dbReference type="PDBsum" id="5Y0V"/>
<dbReference type="PDBsum" id="5Y1B"/>
<dbReference type="SMR" id="Q06GJ0"/>
<dbReference type="BindingDB" id="Q06GJ0"/>
<dbReference type="ChEMBL" id="CHEMBL4295590"/>
<dbReference type="CAZy" id="GH20">
    <property type="family name" value="Glycoside Hydrolase Family 20"/>
</dbReference>
<dbReference type="iPTMnet" id="Q06GJ0"/>
<dbReference type="BRENDA" id="3.2.1.52">
    <property type="organism ID" value="8311"/>
</dbReference>
<dbReference type="EvolutionaryTrace" id="Q06GJ0"/>
<dbReference type="GO" id="GO:0005886">
    <property type="term" value="C:plasma membrane"/>
    <property type="evidence" value="ECO:0007669"/>
    <property type="project" value="TreeGrafter"/>
</dbReference>
<dbReference type="GO" id="GO:0016231">
    <property type="term" value="F:beta-N-acetylglucosaminidase activity"/>
    <property type="evidence" value="ECO:0000314"/>
    <property type="project" value="FlyBase"/>
</dbReference>
<dbReference type="GO" id="GO:0006032">
    <property type="term" value="P:chitin catabolic process"/>
    <property type="evidence" value="ECO:0000314"/>
    <property type="project" value="FlyBase"/>
</dbReference>
<dbReference type="GO" id="GO:0030203">
    <property type="term" value="P:glycosaminoglycan metabolic process"/>
    <property type="evidence" value="ECO:0007669"/>
    <property type="project" value="TreeGrafter"/>
</dbReference>
<dbReference type="GO" id="GO:0000272">
    <property type="term" value="P:polysaccharide catabolic process"/>
    <property type="evidence" value="ECO:0007669"/>
    <property type="project" value="UniProtKB-KW"/>
</dbReference>
<dbReference type="CDD" id="cd06562">
    <property type="entry name" value="GH20_HexA_HexB-like"/>
    <property type="match status" value="1"/>
</dbReference>
<dbReference type="FunFam" id="3.20.20.80:FF:000063">
    <property type="entry name" value="Beta-hexosaminidase"/>
    <property type="match status" value="1"/>
</dbReference>
<dbReference type="Gene3D" id="3.30.379.10">
    <property type="entry name" value="Chitobiase/beta-hexosaminidase domain 2-like"/>
    <property type="match status" value="1"/>
</dbReference>
<dbReference type="Gene3D" id="3.20.20.80">
    <property type="entry name" value="Glycosidases"/>
    <property type="match status" value="1"/>
</dbReference>
<dbReference type="InterPro" id="IPR025705">
    <property type="entry name" value="Beta_hexosaminidase_sua/sub"/>
</dbReference>
<dbReference type="InterPro" id="IPR015883">
    <property type="entry name" value="Glyco_hydro_20_cat"/>
</dbReference>
<dbReference type="InterPro" id="IPR017853">
    <property type="entry name" value="Glycoside_hydrolase_SF"/>
</dbReference>
<dbReference type="InterPro" id="IPR029018">
    <property type="entry name" value="Hex-like_dom2"/>
</dbReference>
<dbReference type="InterPro" id="IPR029019">
    <property type="entry name" value="HEX_eukaryotic_N"/>
</dbReference>
<dbReference type="PANTHER" id="PTHR22600">
    <property type="entry name" value="BETA-HEXOSAMINIDASE"/>
    <property type="match status" value="1"/>
</dbReference>
<dbReference type="PANTHER" id="PTHR22600:SF26">
    <property type="entry name" value="BETA-N-ACETYLHEXOSAMINIDASE"/>
    <property type="match status" value="1"/>
</dbReference>
<dbReference type="Pfam" id="PF00728">
    <property type="entry name" value="Glyco_hydro_20"/>
    <property type="match status" value="1"/>
</dbReference>
<dbReference type="Pfam" id="PF14845">
    <property type="entry name" value="Glycohydro_20b2"/>
    <property type="match status" value="1"/>
</dbReference>
<dbReference type="PIRSF" id="PIRSF001093">
    <property type="entry name" value="B-hxosamndse_ab_euk"/>
    <property type="match status" value="1"/>
</dbReference>
<dbReference type="PRINTS" id="PR00738">
    <property type="entry name" value="GLHYDRLASE20"/>
</dbReference>
<dbReference type="SUPFAM" id="SSF51445">
    <property type="entry name" value="(Trans)glycosidases"/>
    <property type="match status" value="1"/>
</dbReference>
<dbReference type="SUPFAM" id="SSF55545">
    <property type="entry name" value="beta-N-acetylhexosaminidase-like domain"/>
    <property type="match status" value="1"/>
</dbReference>
<evidence type="ECO:0000255" key="1"/>
<evidence type="ECO:0000255" key="2">
    <source>
        <dbReference type="PIRNR" id="PIRNR001093"/>
    </source>
</evidence>
<evidence type="ECO:0000255" key="3">
    <source>
        <dbReference type="PROSITE-ProRule" id="PRU00498"/>
    </source>
</evidence>
<evidence type="ECO:0000269" key="4">
    <source>
    </source>
</evidence>
<evidence type="ECO:0000269" key="5">
    <source>
    </source>
</evidence>
<evidence type="ECO:0000269" key="6">
    <source>
    </source>
</evidence>
<evidence type="ECO:0000269" key="7">
    <source>
    </source>
</evidence>
<evidence type="ECO:0000269" key="8">
    <source>
    </source>
</evidence>
<evidence type="ECO:0000269" key="9">
    <source>
    </source>
</evidence>
<evidence type="ECO:0000269" key="10">
    <source>
    </source>
</evidence>
<evidence type="ECO:0000303" key="11">
    <source>
    </source>
</evidence>
<evidence type="ECO:0000303" key="12">
    <source>
    </source>
</evidence>
<evidence type="ECO:0000303" key="13">
    <source>
    </source>
</evidence>
<evidence type="ECO:0000303" key="14">
    <source>
    </source>
</evidence>
<evidence type="ECO:0000303" key="15">
    <source>
    </source>
</evidence>
<evidence type="ECO:0000303" key="16">
    <source>
    </source>
</evidence>
<evidence type="ECO:0000303" key="17">
    <source>
    </source>
</evidence>
<evidence type="ECO:0000305" key="18"/>
<evidence type="ECO:0000305" key="19">
    <source>
    </source>
</evidence>
<evidence type="ECO:0000305" key="20">
    <source>
    </source>
</evidence>
<evidence type="ECO:0000312" key="21">
    <source>
        <dbReference type="EMBL" id="ABI81756.1"/>
    </source>
</evidence>
<evidence type="ECO:0007744" key="22">
    <source>
        <dbReference type="PDB" id="3NSM"/>
    </source>
</evidence>
<evidence type="ECO:0007744" key="23">
    <source>
        <dbReference type="PDB" id="3NSN"/>
    </source>
</evidence>
<evidence type="ECO:0007744" key="24">
    <source>
        <dbReference type="PDB" id="3OZO"/>
    </source>
</evidence>
<evidence type="ECO:0007744" key="25">
    <source>
        <dbReference type="PDB" id="3OZP"/>
    </source>
</evidence>
<evidence type="ECO:0007744" key="26">
    <source>
        <dbReference type="PDB" id="3S6T"/>
    </source>
</evidence>
<evidence type="ECO:0007744" key="27">
    <source>
        <dbReference type="PDB" id="3VTR"/>
    </source>
</evidence>
<evidence type="ECO:0007744" key="28">
    <source>
        <dbReference type="PDB" id="3WMB"/>
    </source>
</evidence>
<evidence type="ECO:0007744" key="29">
    <source>
        <dbReference type="PDB" id="3WMC"/>
    </source>
</evidence>
<evidence type="ECO:0007744" key="30">
    <source>
        <dbReference type="PDB" id="5Y0V"/>
    </source>
</evidence>
<evidence type="ECO:0007744" key="31">
    <source>
        <dbReference type="PDB" id="5Y1B"/>
    </source>
</evidence>
<evidence type="ECO:0007829" key="32">
    <source>
        <dbReference type="PDB" id="3OZO"/>
    </source>
</evidence>
<evidence type="ECO:0007829" key="33">
    <source>
        <dbReference type="PDB" id="3WMC"/>
    </source>
</evidence>